<protein>
    <recommendedName>
        <fullName>Transcriptional regulatory protein FlgR</fullName>
    </recommendedName>
</protein>
<evidence type="ECO:0000255" key="1">
    <source>
        <dbReference type="PROSITE-ProRule" id="PRU00169"/>
    </source>
</evidence>
<evidence type="ECO:0000255" key="2">
    <source>
        <dbReference type="PROSITE-ProRule" id="PRU00193"/>
    </source>
</evidence>
<evidence type="ECO:0000269" key="3">
    <source>
    </source>
</evidence>
<evidence type="ECO:0000269" key="4">
    <source>
    </source>
</evidence>
<evidence type="ECO:0000269" key="5">
    <source>
    </source>
</evidence>
<comment type="function">
    <text evidence="3 4 5">Member of the two-component regulatory system FlgR/FlgS that induces the transcriptional induction of the genes needed in motility and flagellar biogenesis (PubMed:15231786, PubMed:9882675). Upon phosphorylation by FlgS, functions as a transcriptional regulator and activates transcription of RpoN-dependent flagellar genes (PubMed:10735847, PubMed:15231786).</text>
</comment>
<comment type="PTM">
    <text evidence="3">Phosphorylated by FlgS.</text>
</comment>
<comment type="disruption phenotype">
    <text evidence="4">Disruption leads to loss of motility due to the failure of the mutant strain to express the RpoN-dependent flagellar genes.</text>
</comment>
<reference key="1">
    <citation type="journal article" date="1997" name="Nature">
        <title>The complete genome sequence of the gastric pathogen Helicobacter pylori.</title>
        <authorList>
            <person name="Tomb J.-F."/>
            <person name="White O."/>
            <person name="Kerlavage A.R."/>
            <person name="Clayton R.A."/>
            <person name="Sutton G.G."/>
            <person name="Fleischmann R.D."/>
            <person name="Ketchum K.A."/>
            <person name="Klenk H.-P."/>
            <person name="Gill S.R."/>
            <person name="Dougherty B.A."/>
            <person name="Nelson K.E."/>
            <person name="Quackenbush J."/>
            <person name="Zhou L."/>
            <person name="Kirkness E.F."/>
            <person name="Peterson S.N."/>
            <person name="Loftus B.J."/>
            <person name="Richardson D.L."/>
            <person name="Dodson R.J."/>
            <person name="Khalak H.G."/>
            <person name="Glodek A."/>
            <person name="McKenney K."/>
            <person name="FitzGerald L.M."/>
            <person name="Lee N."/>
            <person name="Adams M.D."/>
            <person name="Hickey E.K."/>
            <person name="Berg D.E."/>
            <person name="Gocayne J.D."/>
            <person name="Utterback T.R."/>
            <person name="Peterson J.D."/>
            <person name="Kelley J.M."/>
            <person name="Cotton M.D."/>
            <person name="Weidman J.F."/>
            <person name="Fujii C."/>
            <person name="Bowman C."/>
            <person name="Watthey L."/>
            <person name="Wallin E."/>
            <person name="Hayes W.S."/>
            <person name="Borodovsky M."/>
            <person name="Karp P.D."/>
            <person name="Smith H.O."/>
            <person name="Fraser C.M."/>
            <person name="Venter J.C."/>
        </authorList>
    </citation>
    <scope>NUCLEOTIDE SEQUENCE [LARGE SCALE GENOMIC DNA]</scope>
    <source>
        <strain>ATCC 700392 / 26695</strain>
    </source>
</reference>
<reference key="2">
    <citation type="journal article" date="1999" name="J. Bacteriol.">
        <title>Motility of Helicobacter pylori is coordinately regulated by the transcriptional activator FlgR, an NtrC homolog.</title>
        <authorList>
            <person name="Spohn G."/>
            <person name="Scarlato V."/>
        </authorList>
    </citation>
    <scope>FUNCTION</scope>
</reference>
<reference key="3">
    <citation type="journal article" date="2000" name="J. Bacteriol.">
        <title>Molecular characterization of two-component systems of Helicobacter pylori.</title>
        <authorList>
            <person name="Beier D."/>
            <person name="Frank R."/>
        </authorList>
    </citation>
    <scope>FUNCTION</scope>
    <scope>PHOSPHORYLATION</scope>
</reference>
<reference key="4">
    <citation type="journal article" date="2004" name="J. Bacteriol.">
        <title>Helicobacter pylori FlgR is an enhancer-independent activator of sigma54-RNA polymerase holoenzyme.</title>
        <authorList>
            <person name="Brahmachary P."/>
            <person name="Dashti M.G."/>
            <person name="Olson J.W."/>
            <person name="Hoover T.R."/>
        </authorList>
    </citation>
    <scope>FUNCTION</scope>
    <scope>DISRUPTION PHENOTYPE</scope>
</reference>
<organism>
    <name type="scientific">Helicobacter pylori (strain ATCC 700392 / 26695)</name>
    <name type="common">Campylobacter pylori</name>
    <dbReference type="NCBI Taxonomy" id="85962"/>
    <lineage>
        <taxon>Bacteria</taxon>
        <taxon>Pseudomonadati</taxon>
        <taxon>Campylobacterota</taxon>
        <taxon>Epsilonproteobacteria</taxon>
        <taxon>Campylobacterales</taxon>
        <taxon>Helicobacteraceae</taxon>
        <taxon>Helicobacter</taxon>
    </lineage>
</organism>
<accession>O25408</accession>
<proteinExistence type="evidence at protein level"/>
<sequence>MKIAIVEDDINMRKSLELFFELQDDLEIVSFKNPKDALAKLDESFDLVITDINMPHMDGLEFLRLLEGKYESIVITGNATLNKAIDSIRLGVKDFFQKPFKPELLLESIYRTKKVLEFQKKHPLEKPLKKPHKHSFLAASKALEESKRQALKVASTDANVMLLGESGVGKEVFAHFIHQHSQRSKHPFIAINMSAIPEHLLESELFGYQKGAFTDATAPKMGLFESANKGTIFLDEIAEMPLQLQSKLLRVVQEKEITRLGDNKSVKIDVRFISATNANMKEKIAAKEFREDLFFRLQIVPITIAPLRERVEEILPIAEIKLKEVCDAYHLGPKSFSKNAAKCLLEYSWHGNVRELLGVVERAAILSEETEIQEKDLFLER</sequence>
<keyword id="KW-0067">ATP-binding</keyword>
<keyword id="KW-0238">DNA-binding</keyword>
<keyword id="KW-0547">Nucleotide-binding</keyword>
<keyword id="KW-0597">Phosphoprotein</keyword>
<keyword id="KW-1185">Reference proteome</keyword>
<keyword id="KW-0804">Transcription</keyword>
<keyword id="KW-0805">Transcription regulation</keyword>
<keyword id="KW-0902">Two-component regulatory system</keyword>
<dbReference type="EMBL" id="AE000511">
    <property type="protein sequence ID" value="AAD07754.1"/>
    <property type="molecule type" value="Genomic_DNA"/>
</dbReference>
<dbReference type="PIR" id="G64607">
    <property type="entry name" value="G64607"/>
</dbReference>
<dbReference type="RefSeq" id="NP_207497.1">
    <property type="nucleotide sequence ID" value="NC_000915.1"/>
</dbReference>
<dbReference type="RefSeq" id="WP_000684509.1">
    <property type="nucleotide sequence ID" value="NC_018939.1"/>
</dbReference>
<dbReference type="SMR" id="O25408"/>
<dbReference type="DIP" id="DIP-3569N"/>
<dbReference type="FunCoup" id="O25408">
    <property type="interactions" value="256"/>
</dbReference>
<dbReference type="IntAct" id="O25408">
    <property type="interactions" value="2"/>
</dbReference>
<dbReference type="MINT" id="O25408"/>
<dbReference type="STRING" id="85962.HP_0703"/>
<dbReference type="PaxDb" id="85962-C694_03625"/>
<dbReference type="EnsemblBacteria" id="AAD07754">
    <property type="protein sequence ID" value="AAD07754"/>
    <property type="gene ID" value="HP_0703"/>
</dbReference>
<dbReference type="KEGG" id="heo:C694_03625"/>
<dbReference type="KEGG" id="hpy:HP_0703"/>
<dbReference type="PATRIC" id="fig|85962.47.peg.752"/>
<dbReference type="eggNOG" id="COG2204">
    <property type="taxonomic scope" value="Bacteria"/>
</dbReference>
<dbReference type="InParanoid" id="O25408"/>
<dbReference type="OrthoDB" id="9814761at2"/>
<dbReference type="PhylomeDB" id="O25408"/>
<dbReference type="Proteomes" id="UP000000429">
    <property type="component" value="Chromosome"/>
</dbReference>
<dbReference type="GO" id="GO:0032993">
    <property type="term" value="C:protein-DNA complex"/>
    <property type="evidence" value="ECO:0000318"/>
    <property type="project" value="GO_Central"/>
</dbReference>
<dbReference type="GO" id="GO:0005524">
    <property type="term" value="F:ATP binding"/>
    <property type="evidence" value="ECO:0007669"/>
    <property type="project" value="UniProtKB-KW"/>
</dbReference>
<dbReference type="GO" id="GO:0016887">
    <property type="term" value="F:ATP hydrolysis activity"/>
    <property type="evidence" value="ECO:0007669"/>
    <property type="project" value="InterPro"/>
</dbReference>
<dbReference type="GO" id="GO:0000987">
    <property type="term" value="F:cis-regulatory region sequence-specific DNA binding"/>
    <property type="evidence" value="ECO:0000318"/>
    <property type="project" value="GO_Central"/>
</dbReference>
<dbReference type="GO" id="GO:0001216">
    <property type="term" value="F:DNA-binding transcription activator activity"/>
    <property type="evidence" value="ECO:0000318"/>
    <property type="project" value="GO_Central"/>
</dbReference>
<dbReference type="GO" id="GO:0000160">
    <property type="term" value="P:phosphorelay signal transduction system"/>
    <property type="evidence" value="ECO:0007669"/>
    <property type="project" value="UniProtKB-KW"/>
</dbReference>
<dbReference type="GO" id="GO:0045893">
    <property type="term" value="P:positive regulation of DNA-templated transcription"/>
    <property type="evidence" value="ECO:0000318"/>
    <property type="project" value="GO_Central"/>
</dbReference>
<dbReference type="CDD" id="cd00009">
    <property type="entry name" value="AAA"/>
    <property type="match status" value="1"/>
</dbReference>
<dbReference type="FunFam" id="3.40.50.300:FF:000006">
    <property type="entry name" value="DNA-binding transcriptional regulator NtrC"/>
    <property type="match status" value="1"/>
</dbReference>
<dbReference type="Gene3D" id="1.10.8.60">
    <property type="match status" value="1"/>
</dbReference>
<dbReference type="Gene3D" id="3.40.50.2300">
    <property type="match status" value="1"/>
</dbReference>
<dbReference type="Gene3D" id="3.40.50.300">
    <property type="entry name" value="P-loop containing nucleotide triphosphate hydrolases"/>
    <property type="match status" value="1"/>
</dbReference>
<dbReference type="InterPro" id="IPR003593">
    <property type="entry name" value="AAA+_ATPase"/>
</dbReference>
<dbReference type="InterPro" id="IPR011006">
    <property type="entry name" value="CheY-like_superfamily"/>
</dbReference>
<dbReference type="InterPro" id="IPR027417">
    <property type="entry name" value="P-loop_NTPase"/>
</dbReference>
<dbReference type="InterPro" id="IPR001789">
    <property type="entry name" value="Sig_transdc_resp-reg_receiver"/>
</dbReference>
<dbReference type="InterPro" id="IPR002078">
    <property type="entry name" value="Sigma_54_int"/>
</dbReference>
<dbReference type="InterPro" id="IPR025662">
    <property type="entry name" value="Sigma_54_int_dom_ATP-bd_1"/>
</dbReference>
<dbReference type="InterPro" id="IPR025943">
    <property type="entry name" value="Sigma_54_int_dom_ATP-bd_2"/>
</dbReference>
<dbReference type="PANTHER" id="PTHR32071">
    <property type="entry name" value="TRANSCRIPTIONAL REGULATORY PROTEIN"/>
    <property type="match status" value="1"/>
</dbReference>
<dbReference type="PANTHER" id="PTHR32071:SF21">
    <property type="entry name" value="TRANSCRIPTIONAL REGULATORY PROTEIN FLGR"/>
    <property type="match status" value="1"/>
</dbReference>
<dbReference type="Pfam" id="PF00072">
    <property type="entry name" value="Response_reg"/>
    <property type="match status" value="1"/>
</dbReference>
<dbReference type="Pfam" id="PF00158">
    <property type="entry name" value="Sigma54_activat"/>
    <property type="match status" value="1"/>
</dbReference>
<dbReference type="SMART" id="SM00382">
    <property type="entry name" value="AAA"/>
    <property type="match status" value="1"/>
</dbReference>
<dbReference type="SMART" id="SM00448">
    <property type="entry name" value="REC"/>
    <property type="match status" value="1"/>
</dbReference>
<dbReference type="SUPFAM" id="SSF52172">
    <property type="entry name" value="CheY-like"/>
    <property type="match status" value="1"/>
</dbReference>
<dbReference type="SUPFAM" id="SSF52540">
    <property type="entry name" value="P-loop containing nucleoside triphosphate hydrolases"/>
    <property type="match status" value="1"/>
</dbReference>
<dbReference type="PROSITE" id="PS50110">
    <property type="entry name" value="RESPONSE_REGULATORY"/>
    <property type="match status" value="1"/>
</dbReference>
<dbReference type="PROSITE" id="PS00675">
    <property type="entry name" value="SIGMA54_INTERACT_1"/>
    <property type="match status" value="1"/>
</dbReference>
<dbReference type="PROSITE" id="PS00676">
    <property type="entry name" value="SIGMA54_INTERACT_2"/>
    <property type="match status" value="1"/>
</dbReference>
<dbReference type="PROSITE" id="PS50045">
    <property type="entry name" value="SIGMA54_INTERACT_4"/>
    <property type="match status" value="1"/>
</dbReference>
<feature type="chain" id="PRO_0000448706" description="Transcriptional regulatory protein FlgR">
    <location>
        <begin position="1"/>
        <end position="381"/>
    </location>
</feature>
<feature type="domain" description="Response regulatory" evidence="1">
    <location>
        <begin position="2"/>
        <end position="113"/>
    </location>
</feature>
<feature type="domain" description="Sigma-54 factor interaction" evidence="2">
    <location>
        <begin position="136"/>
        <end position="365"/>
    </location>
</feature>
<feature type="binding site" evidence="2">
    <location>
        <begin position="164"/>
        <end position="171"/>
    </location>
    <ligand>
        <name>ATP</name>
        <dbReference type="ChEBI" id="CHEBI:30616"/>
    </ligand>
</feature>
<feature type="binding site" evidence="2">
    <location>
        <begin position="227"/>
        <end position="236"/>
    </location>
    <ligand>
        <name>ATP</name>
        <dbReference type="ChEBI" id="CHEBI:30616"/>
    </ligand>
</feature>
<feature type="modified residue" description="4-aspartylphosphate" evidence="1">
    <location>
        <position position="51"/>
    </location>
</feature>
<name>FLGR_HELPY</name>
<gene>
    <name type="primary">flgR</name>
    <name type="ordered locus">HP_0703</name>
</gene>